<sequence>MPRKHLIASGINKKQQQQAKIWMKCAKEIKAAAKMGGPNPEANPRLKVAIERALNNNLSRDSIERNINGASKDADNLKELTYEGYGPNGLAIIVRALTDNEQRTISAVRGYFSKLQGQIAKPNSVSMLFNEYGQLLIDKKTKTLDEWFELLVDQDIVDINEDDEIIEILVQPKDFSATKLILENNNANIQSAEIKLIPTDFISLDDHARERLVRFVNACENDDDISWVITNYEEEL</sequence>
<feature type="chain" id="PRO_1000132253" description="Probable transcriptional regulatory protein UUR10_0292">
    <location>
        <begin position="1"/>
        <end position="236"/>
    </location>
</feature>
<gene>
    <name type="ordered locus">UUR10_0292</name>
</gene>
<comment type="subcellular location">
    <subcellularLocation>
        <location evidence="1">Cytoplasm</location>
    </subcellularLocation>
</comment>
<comment type="similarity">
    <text evidence="1">Belongs to the TACO1 family.</text>
</comment>
<keyword id="KW-0963">Cytoplasm</keyword>
<keyword id="KW-0238">DNA-binding</keyword>
<keyword id="KW-0804">Transcription</keyword>
<keyword id="KW-0805">Transcription regulation</keyword>
<protein>
    <recommendedName>
        <fullName evidence="1">Probable transcriptional regulatory protein UUR10_0292</fullName>
    </recommendedName>
</protein>
<dbReference type="EMBL" id="CP001184">
    <property type="protein sequence ID" value="ACI59844.1"/>
    <property type="molecule type" value="Genomic_DNA"/>
</dbReference>
<dbReference type="RefSeq" id="WP_004025952.1">
    <property type="nucleotide sequence ID" value="NC_011374.1"/>
</dbReference>
<dbReference type="SMR" id="B5ZBA5"/>
<dbReference type="STRING" id="565575.UUR10_0292"/>
<dbReference type="KEGG" id="uue:UUR10_0292"/>
<dbReference type="eggNOG" id="COG0217">
    <property type="taxonomic scope" value="Bacteria"/>
</dbReference>
<dbReference type="HOGENOM" id="CLU_062974_2_2_14"/>
<dbReference type="OrthoDB" id="9781053at2"/>
<dbReference type="Proteomes" id="UP000002018">
    <property type="component" value="Chromosome"/>
</dbReference>
<dbReference type="GO" id="GO:0005829">
    <property type="term" value="C:cytosol"/>
    <property type="evidence" value="ECO:0007669"/>
    <property type="project" value="TreeGrafter"/>
</dbReference>
<dbReference type="GO" id="GO:0003677">
    <property type="term" value="F:DNA binding"/>
    <property type="evidence" value="ECO:0007669"/>
    <property type="project" value="UniProtKB-UniRule"/>
</dbReference>
<dbReference type="GO" id="GO:0006355">
    <property type="term" value="P:regulation of DNA-templated transcription"/>
    <property type="evidence" value="ECO:0007669"/>
    <property type="project" value="UniProtKB-UniRule"/>
</dbReference>
<dbReference type="Gene3D" id="1.10.10.200">
    <property type="match status" value="1"/>
</dbReference>
<dbReference type="Gene3D" id="3.30.70.980">
    <property type="match status" value="2"/>
</dbReference>
<dbReference type="HAMAP" id="MF_00693">
    <property type="entry name" value="Transcrip_reg_TACO1"/>
    <property type="match status" value="1"/>
</dbReference>
<dbReference type="InterPro" id="IPR017856">
    <property type="entry name" value="Integrase-like_N"/>
</dbReference>
<dbReference type="InterPro" id="IPR048300">
    <property type="entry name" value="TACO1_YebC-like_2nd/3rd_dom"/>
</dbReference>
<dbReference type="InterPro" id="IPR049083">
    <property type="entry name" value="TACO1_YebC_N"/>
</dbReference>
<dbReference type="InterPro" id="IPR002876">
    <property type="entry name" value="Transcrip_reg_TACO1-like"/>
</dbReference>
<dbReference type="InterPro" id="IPR026564">
    <property type="entry name" value="Transcrip_reg_TACO1-like_dom3"/>
</dbReference>
<dbReference type="InterPro" id="IPR029072">
    <property type="entry name" value="YebC-like"/>
</dbReference>
<dbReference type="NCBIfam" id="NF009044">
    <property type="entry name" value="PRK12378.1"/>
    <property type="match status" value="1"/>
</dbReference>
<dbReference type="NCBIfam" id="TIGR01033">
    <property type="entry name" value="YebC/PmpR family DNA-binding transcriptional regulator"/>
    <property type="match status" value="1"/>
</dbReference>
<dbReference type="PANTHER" id="PTHR12532:SF6">
    <property type="entry name" value="TRANSCRIPTIONAL REGULATORY PROTEIN YEBC-RELATED"/>
    <property type="match status" value="1"/>
</dbReference>
<dbReference type="PANTHER" id="PTHR12532">
    <property type="entry name" value="TRANSLATIONAL ACTIVATOR OF CYTOCHROME C OXIDASE 1"/>
    <property type="match status" value="1"/>
</dbReference>
<dbReference type="Pfam" id="PF20772">
    <property type="entry name" value="TACO1_YebC_N"/>
    <property type="match status" value="1"/>
</dbReference>
<dbReference type="Pfam" id="PF01709">
    <property type="entry name" value="Transcrip_reg"/>
    <property type="match status" value="1"/>
</dbReference>
<dbReference type="SUPFAM" id="SSF75625">
    <property type="entry name" value="YebC-like"/>
    <property type="match status" value="1"/>
</dbReference>
<reference key="1">
    <citation type="submission" date="2008-10" db="EMBL/GenBank/DDBJ databases">
        <title>Genome sequence of Ureaplasma urealyticum serovar 10 ATCC-33699.</title>
        <authorList>
            <person name="Shrivastava S."/>
            <person name="Methe B.A."/>
            <person name="Glass J."/>
            <person name="White K."/>
            <person name="Duffy L.B."/>
        </authorList>
    </citation>
    <scope>NUCLEOTIDE SEQUENCE [LARGE SCALE GENOMIC DNA]</scope>
    <source>
        <strain>ATCC 33699 / Western</strain>
    </source>
</reference>
<accession>B5ZBA5</accession>
<organism>
    <name type="scientific">Ureaplasma urealyticum serovar 10 (strain ATCC 33699 / Western)</name>
    <dbReference type="NCBI Taxonomy" id="565575"/>
    <lineage>
        <taxon>Bacteria</taxon>
        <taxon>Bacillati</taxon>
        <taxon>Mycoplasmatota</taxon>
        <taxon>Mycoplasmoidales</taxon>
        <taxon>Mycoplasmoidaceae</taxon>
        <taxon>Ureaplasma</taxon>
    </lineage>
</organism>
<name>Y292_UREU1</name>
<evidence type="ECO:0000255" key="1">
    <source>
        <dbReference type="HAMAP-Rule" id="MF_00693"/>
    </source>
</evidence>
<proteinExistence type="inferred from homology"/>